<comment type="function">
    <text evidence="1">Converts heme B (protoheme IX) to heme O by substitution of the vinyl group on carbon 2 of heme B porphyrin ring with a hydroxyethyl farnesyl side group.</text>
</comment>
<comment type="catalytic activity">
    <reaction evidence="1">
        <text>heme b + (2E,6E)-farnesyl diphosphate + H2O = Fe(II)-heme o + diphosphate</text>
        <dbReference type="Rhea" id="RHEA:28070"/>
        <dbReference type="ChEBI" id="CHEBI:15377"/>
        <dbReference type="ChEBI" id="CHEBI:33019"/>
        <dbReference type="ChEBI" id="CHEBI:60344"/>
        <dbReference type="ChEBI" id="CHEBI:60530"/>
        <dbReference type="ChEBI" id="CHEBI:175763"/>
        <dbReference type="EC" id="2.5.1.141"/>
    </reaction>
</comment>
<comment type="pathway">
    <text evidence="1">Porphyrin-containing compound metabolism; heme O biosynthesis; heme O from protoheme: step 1/1.</text>
</comment>
<comment type="subcellular location">
    <subcellularLocation>
        <location evidence="1">Cell inner membrane</location>
        <topology evidence="1">Multi-pass membrane protein</topology>
    </subcellularLocation>
</comment>
<comment type="miscellaneous">
    <text evidence="1">Carbon 2 of the heme B porphyrin ring is defined according to the Fischer nomenclature.</text>
</comment>
<comment type="similarity">
    <text evidence="1">Belongs to the UbiA prenyltransferase family. Protoheme IX farnesyltransferase subfamily.</text>
</comment>
<proteinExistence type="inferred from homology"/>
<reference key="1">
    <citation type="submission" date="2007-05" db="EMBL/GenBank/DDBJ databases">
        <title>Complete sequence of Geobacter uraniireducens Rf4.</title>
        <authorList>
            <consortium name="US DOE Joint Genome Institute"/>
            <person name="Copeland A."/>
            <person name="Lucas S."/>
            <person name="Lapidus A."/>
            <person name="Barry K."/>
            <person name="Detter J.C."/>
            <person name="Glavina del Rio T."/>
            <person name="Hammon N."/>
            <person name="Israni S."/>
            <person name="Dalin E."/>
            <person name="Tice H."/>
            <person name="Pitluck S."/>
            <person name="Chertkov O."/>
            <person name="Brettin T."/>
            <person name="Bruce D."/>
            <person name="Han C."/>
            <person name="Schmutz J."/>
            <person name="Larimer F."/>
            <person name="Land M."/>
            <person name="Hauser L."/>
            <person name="Kyrpides N."/>
            <person name="Mikhailova N."/>
            <person name="Shelobolina E."/>
            <person name="Aklujkar M."/>
            <person name="Lovley D."/>
            <person name="Richardson P."/>
        </authorList>
    </citation>
    <scope>NUCLEOTIDE SEQUENCE [LARGE SCALE GENOMIC DNA]</scope>
    <source>
        <strain>ATCC BAA-1134 / JCM 13001 / Rf4</strain>
    </source>
</reference>
<name>COXX_GEOUR</name>
<protein>
    <recommendedName>
        <fullName evidence="1">Protoheme IX farnesyltransferase</fullName>
        <ecNumber evidence="1">2.5.1.141</ecNumber>
    </recommendedName>
    <alternativeName>
        <fullName evidence="1">Heme B farnesyltransferase</fullName>
    </alternativeName>
    <alternativeName>
        <fullName evidence="1">Heme O synthase</fullName>
    </alternativeName>
</protein>
<keyword id="KW-0997">Cell inner membrane</keyword>
<keyword id="KW-1003">Cell membrane</keyword>
<keyword id="KW-0350">Heme biosynthesis</keyword>
<keyword id="KW-0472">Membrane</keyword>
<keyword id="KW-1185">Reference proteome</keyword>
<keyword id="KW-0808">Transferase</keyword>
<keyword id="KW-0812">Transmembrane</keyword>
<keyword id="KW-1133">Transmembrane helix</keyword>
<gene>
    <name evidence="1" type="primary">ctaB</name>
    <name type="ordered locus">Gura_0404</name>
</gene>
<sequence length="259" mass="28074">MVLAGRGMPGTKECLICLTALLLAAAAAAMINGVLDAKLDARMARLHRRVASLERIGAQRATVAAAGMLFAALALSITFLPRLTTALILLAIFSYTPLYTLWFKRRSPWGVVPGGIPGALPVLVGASAVSGTISSAPLILFLVMLLWQPPHFWALALKHQDDYRRAGVPTLPLVRGEAYTKVCIFVFAALLLPASLALWFTGACSARFAIEALCLGFFNLFSCYLYLVKNRRFQRAFQASIFYLLGLLSAVIIDICSRP</sequence>
<evidence type="ECO:0000255" key="1">
    <source>
        <dbReference type="HAMAP-Rule" id="MF_00154"/>
    </source>
</evidence>
<dbReference type="EC" id="2.5.1.141" evidence="1"/>
<dbReference type="EMBL" id="CP000698">
    <property type="protein sequence ID" value="ABQ24620.1"/>
    <property type="molecule type" value="Genomic_DNA"/>
</dbReference>
<dbReference type="SMR" id="A5GCT1"/>
<dbReference type="STRING" id="351605.Gura_0404"/>
<dbReference type="KEGG" id="gur:Gura_0404"/>
<dbReference type="HOGENOM" id="CLU_029631_0_0_7"/>
<dbReference type="UniPathway" id="UPA00834">
    <property type="reaction ID" value="UER00712"/>
</dbReference>
<dbReference type="Proteomes" id="UP000006695">
    <property type="component" value="Chromosome"/>
</dbReference>
<dbReference type="GO" id="GO:0005886">
    <property type="term" value="C:plasma membrane"/>
    <property type="evidence" value="ECO:0007669"/>
    <property type="project" value="UniProtKB-SubCell"/>
</dbReference>
<dbReference type="GO" id="GO:0008495">
    <property type="term" value="F:protoheme IX farnesyltransferase activity"/>
    <property type="evidence" value="ECO:0007669"/>
    <property type="project" value="UniProtKB-UniRule"/>
</dbReference>
<dbReference type="GO" id="GO:0048034">
    <property type="term" value="P:heme O biosynthetic process"/>
    <property type="evidence" value="ECO:0007669"/>
    <property type="project" value="UniProtKB-UniRule"/>
</dbReference>
<dbReference type="CDD" id="cd13957">
    <property type="entry name" value="PT_UbiA_Cox10"/>
    <property type="match status" value="1"/>
</dbReference>
<dbReference type="Gene3D" id="1.10.357.140">
    <property type="entry name" value="UbiA prenyltransferase"/>
    <property type="match status" value="1"/>
</dbReference>
<dbReference type="HAMAP" id="MF_00154">
    <property type="entry name" value="CyoE_CtaB"/>
    <property type="match status" value="1"/>
</dbReference>
<dbReference type="InterPro" id="IPR006369">
    <property type="entry name" value="Protohaem_IX_farnesylTrfase"/>
</dbReference>
<dbReference type="InterPro" id="IPR000537">
    <property type="entry name" value="UbiA_prenyltransferase"/>
</dbReference>
<dbReference type="InterPro" id="IPR044878">
    <property type="entry name" value="UbiA_sf"/>
</dbReference>
<dbReference type="PANTHER" id="PTHR43448:SF7">
    <property type="entry name" value="4-HYDROXYBENZOATE SOLANESYLTRANSFERASE"/>
    <property type="match status" value="1"/>
</dbReference>
<dbReference type="PANTHER" id="PTHR43448">
    <property type="entry name" value="PROTOHEME IX FARNESYLTRANSFERASE, MITOCHONDRIAL"/>
    <property type="match status" value="1"/>
</dbReference>
<dbReference type="Pfam" id="PF01040">
    <property type="entry name" value="UbiA"/>
    <property type="match status" value="1"/>
</dbReference>
<organism>
    <name type="scientific">Geotalea uraniireducens (strain Rf4)</name>
    <name type="common">Geobacter uraniireducens</name>
    <dbReference type="NCBI Taxonomy" id="351605"/>
    <lineage>
        <taxon>Bacteria</taxon>
        <taxon>Pseudomonadati</taxon>
        <taxon>Thermodesulfobacteriota</taxon>
        <taxon>Desulfuromonadia</taxon>
        <taxon>Geobacterales</taxon>
        <taxon>Geobacteraceae</taxon>
        <taxon>Geotalea</taxon>
    </lineage>
</organism>
<feature type="chain" id="PRO_0000346049" description="Protoheme IX farnesyltransferase">
    <location>
        <begin position="1"/>
        <end position="259"/>
    </location>
</feature>
<feature type="transmembrane region" description="Helical" evidence="1">
    <location>
        <begin position="15"/>
        <end position="35"/>
    </location>
</feature>
<feature type="transmembrane region" description="Helical" evidence="1">
    <location>
        <begin position="61"/>
        <end position="81"/>
    </location>
</feature>
<feature type="transmembrane region" description="Helical" evidence="1">
    <location>
        <begin position="83"/>
        <end position="103"/>
    </location>
</feature>
<feature type="transmembrane region" description="Helical" evidence="1">
    <location>
        <begin position="109"/>
        <end position="129"/>
    </location>
</feature>
<feature type="transmembrane region" description="Helical" evidence="1">
    <location>
        <begin position="137"/>
        <end position="157"/>
    </location>
</feature>
<feature type="transmembrane region" description="Helical" evidence="1">
    <location>
        <begin position="182"/>
        <end position="202"/>
    </location>
</feature>
<feature type="transmembrane region" description="Helical" evidence="1">
    <location>
        <begin position="208"/>
        <end position="228"/>
    </location>
</feature>
<feature type="transmembrane region" description="Helical" evidence="1">
    <location>
        <begin position="236"/>
        <end position="256"/>
    </location>
</feature>
<accession>A5GCT1</accession>